<feature type="chain" id="PRO_0000271426" description="Histamine N-methyltransferase A">
    <location>
        <begin position="1"/>
        <end position="293"/>
    </location>
</feature>
<feature type="binding site" evidence="2">
    <location>
        <position position="28"/>
    </location>
    <ligand>
        <name>substrate</name>
    </ligand>
</feature>
<feature type="binding site" evidence="2">
    <location>
        <position position="60"/>
    </location>
    <ligand>
        <name>S-adenosyl-L-methionine</name>
        <dbReference type="ChEBI" id="CHEBI:59789"/>
    </ligand>
</feature>
<feature type="binding site" evidence="2">
    <location>
        <position position="89"/>
    </location>
    <ligand>
        <name>S-adenosyl-L-methionine</name>
        <dbReference type="ChEBI" id="CHEBI:59789"/>
    </ligand>
</feature>
<feature type="binding site" evidence="2">
    <location>
        <position position="94"/>
    </location>
    <ligand>
        <name>S-adenosyl-L-methionine</name>
        <dbReference type="ChEBI" id="CHEBI:59789"/>
    </ligand>
</feature>
<feature type="binding site" evidence="2">
    <location>
        <position position="120"/>
    </location>
    <ligand>
        <name>S-adenosyl-L-methionine</name>
        <dbReference type="ChEBI" id="CHEBI:59789"/>
    </ligand>
</feature>
<feature type="binding site" evidence="2">
    <location>
        <position position="142"/>
    </location>
    <ligand>
        <name>S-adenosyl-L-methionine</name>
        <dbReference type="ChEBI" id="CHEBI:59789"/>
    </ligand>
</feature>
<feature type="binding site" evidence="2">
    <location>
        <position position="283"/>
    </location>
    <ligand>
        <name>substrate</name>
    </ligand>
</feature>
<dbReference type="EC" id="2.1.1.8" evidence="1"/>
<dbReference type="EMBL" id="BC084942">
    <property type="protein sequence ID" value="AAH84942.1"/>
    <property type="molecule type" value="mRNA"/>
</dbReference>
<dbReference type="RefSeq" id="NP_001088552.1">
    <property type="nucleotide sequence ID" value="NM_001095083.1"/>
</dbReference>
<dbReference type="SMR" id="Q5U4V2"/>
<dbReference type="GeneID" id="495426"/>
<dbReference type="KEGG" id="xla:495426"/>
<dbReference type="AGR" id="Xenbase:XB-GENE-6253847"/>
<dbReference type="CTD" id="495426"/>
<dbReference type="Xenbase" id="XB-GENE-6253847">
    <property type="gene designation" value="hnmt.L"/>
</dbReference>
<dbReference type="OrthoDB" id="5984880at2759"/>
<dbReference type="Proteomes" id="UP000186698">
    <property type="component" value="Chromosome 9_10L"/>
</dbReference>
<dbReference type="Bgee" id="495426">
    <property type="expression patterns" value="Expressed in kidney and 17 other cell types or tissues"/>
</dbReference>
<dbReference type="GO" id="GO:0005737">
    <property type="term" value="C:cytoplasm"/>
    <property type="evidence" value="ECO:0000250"/>
    <property type="project" value="UniProtKB"/>
</dbReference>
<dbReference type="GO" id="GO:0046539">
    <property type="term" value="F:histamine N-methyltransferase activity"/>
    <property type="evidence" value="ECO:0000250"/>
    <property type="project" value="UniProtKB"/>
</dbReference>
<dbReference type="GO" id="GO:0001695">
    <property type="term" value="P:histamine catabolic process"/>
    <property type="evidence" value="ECO:0000250"/>
    <property type="project" value="UniProtKB"/>
</dbReference>
<dbReference type="GO" id="GO:0032259">
    <property type="term" value="P:methylation"/>
    <property type="evidence" value="ECO:0000250"/>
    <property type="project" value="UniProtKB"/>
</dbReference>
<dbReference type="CDD" id="cd02440">
    <property type="entry name" value="AdoMet_MTases"/>
    <property type="match status" value="1"/>
</dbReference>
<dbReference type="FunFam" id="3.40.50.150:FF:000118">
    <property type="entry name" value="Histamine N-methyltransferase"/>
    <property type="match status" value="1"/>
</dbReference>
<dbReference type="Gene3D" id="3.40.50.150">
    <property type="entry name" value="Vaccinia Virus protein VP39"/>
    <property type="match status" value="1"/>
</dbReference>
<dbReference type="InterPro" id="IPR016673">
    <property type="entry name" value="HHMT-like"/>
</dbReference>
<dbReference type="InterPro" id="IPR029063">
    <property type="entry name" value="SAM-dependent_MTases_sf"/>
</dbReference>
<dbReference type="Pfam" id="PF13489">
    <property type="entry name" value="Methyltransf_23"/>
    <property type="match status" value="1"/>
</dbReference>
<dbReference type="PIRSF" id="PIRSF016616">
    <property type="entry name" value="HHMT"/>
    <property type="match status" value="1"/>
</dbReference>
<dbReference type="SUPFAM" id="SSF53335">
    <property type="entry name" value="S-adenosyl-L-methionine-dependent methyltransferases"/>
    <property type="match status" value="1"/>
</dbReference>
<dbReference type="PROSITE" id="PS51597">
    <property type="entry name" value="SAM_HNMT"/>
    <property type="match status" value="1"/>
</dbReference>
<proteinExistence type="evidence at transcript level"/>
<protein>
    <recommendedName>
        <fullName>Histamine N-methyltransferase A</fullName>
        <shortName>HMT A</shortName>
        <ecNumber evidence="1">2.1.1.8</ecNumber>
    </recommendedName>
</protein>
<comment type="function">
    <text evidence="1">Inactivates histamine by N-methylation. Plays an important role in degrading histamine and in regulating the airway response to histamine.</text>
</comment>
<comment type="catalytic activity">
    <reaction evidence="1 2">
        <text>histamine + S-adenosyl-L-methionine = N(tau)-methylhistamine + S-adenosyl-L-homocysteine + H(+)</text>
        <dbReference type="Rhea" id="RHEA:19301"/>
        <dbReference type="ChEBI" id="CHEBI:15378"/>
        <dbReference type="ChEBI" id="CHEBI:57856"/>
        <dbReference type="ChEBI" id="CHEBI:58432"/>
        <dbReference type="ChEBI" id="CHEBI:58600"/>
        <dbReference type="ChEBI" id="CHEBI:59789"/>
        <dbReference type="EC" id="2.1.1.8"/>
    </reaction>
</comment>
<comment type="subunit">
    <text evidence="1">Monomer.</text>
</comment>
<comment type="subcellular location">
    <subcellularLocation>
        <location evidence="1">Cytoplasm</location>
    </subcellularLocation>
</comment>
<comment type="similarity">
    <text evidence="2">Belongs to the class I-like SAM-binding methyltransferase superfamily. HNMT family.</text>
</comment>
<name>HNMTA_XENLA</name>
<gene>
    <name type="primary">hnmt-a</name>
</gene>
<keyword id="KW-0963">Cytoplasm</keyword>
<keyword id="KW-0489">Methyltransferase</keyword>
<keyword id="KW-1185">Reference proteome</keyword>
<keyword id="KW-0949">S-adenosyl-L-methionine</keyword>
<keyword id="KW-0808">Transferase</keyword>
<organism>
    <name type="scientific">Xenopus laevis</name>
    <name type="common">African clawed frog</name>
    <dbReference type="NCBI Taxonomy" id="8355"/>
    <lineage>
        <taxon>Eukaryota</taxon>
        <taxon>Metazoa</taxon>
        <taxon>Chordata</taxon>
        <taxon>Craniata</taxon>
        <taxon>Vertebrata</taxon>
        <taxon>Euteleostomi</taxon>
        <taxon>Amphibia</taxon>
        <taxon>Batrachia</taxon>
        <taxon>Anura</taxon>
        <taxon>Pipoidea</taxon>
        <taxon>Pipidae</taxon>
        <taxon>Xenopodinae</taxon>
        <taxon>Xenopus</taxon>
        <taxon>Xenopus</taxon>
    </lineage>
</organism>
<reference key="1">
    <citation type="submission" date="2004-10" db="EMBL/GenBank/DDBJ databases">
        <authorList>
            <consortium name="NIH - Xenopus Gene Collection (XGC) project"/>
        </authorList>
    </citation>
    <scope>NUCLEOTIDE SEQUENCE [LARGE SCALE MRNA]</scope>
    <source>
        <tissue>Kidney</tissue>
    </source>
</reference>
<accession>Q5U4V2</accession>
<sequence>MDSKLRSLLSDHSRYVESFRLFLQNSTEHQCMQHFIESKLPNIISSIGNDKPVIDVLGVGSGSGEIDLQMIAKIQARWPGVPINNQIVEPSAEQIFGYKERVAKAPNLENVTFSWHRQTSSEFESQVNEDKQMRKFDFIHMIQMLYYVKDVLGTLKFFKSCLAPSGKLLIILVSGNSGWATLWKKYGQRLPLNDLCLYITAGDIAEMLSSMGARFQSHELQSDMDITECFIEGDRDGELLLDFLTETCDFKRNAPADLRDQIICDLKSPGCSTTKDGKVIFNNNLSVIVVEAD</sequence>
<evidence type="ECO:0000250" key="1">
    <source>
        <dbReference type="UniProtKB" id="P50135"/>
    </source>
</evidence>
<evidence type="ECO:0000255" key="2">
    <source>
        <dbReference type="PROSITE-ProRule" id="PRU00929"/>
    </source>
</evidence>